<organism>
    <name type="scientific">Desulforamulus reducens (strain ATCC BAA-1160 / DSM 100696 / MI-1)</name>
    <name type="common">Desulfotomaculum reducens</name>
    <dbReference type="NCBI Taxonomy" id="349161"/>
    <lineage>
        <taxon>Bacteria</taxon>
        <taxon>Bacillati</taxon>
        <taxon>Bacillota</taxon>
        <taxon>Clostridia</taxon>
        <taxon>Eubacteriales</taxon>
        <taxon>Peptococcaceae</taxon>
        <taxon>Desulforamulus</taxon>
    </lineage>
</organism>
<dbReference type="EC" id="5.3.1.24" evidence="1"/>
<dbReference type="EMBL" id="CP000612">
    <property type="protein sequence ID" value="ABO48801.1"/>
    <property type="molecule type" value="Genomic_DNA"/>
</dbReference>
<dbReference type="SMR" id="A4J148"/>
<dbReference type="STRING" id="349161.Dred_0252"/>
<dbReference type="KEGG" id="drm:Dred_0252"/>
<dbReference type="eggNOG" id="COG0135">
    <property type="taxonomic scope" value="Bacteria"/>
</dbReference>
<dbReference type="HOGENOM" id="CLU_076364_2_0_9"/>
<dbReference type="OrthoDB" id="9786954at2"/>
<dbReference type="UniPathway" id="UPA00035">
    <property type="reaction ID" value="UER00042"/>
</dbReference>
<dbReference type="Proteomes" id="UP000001556">
    <property type="component" value="Chromosome"/>
</dbReference>
<dbReference type="GO" id="GO:0004640">
    <property type="term" value="F:phosphoribosylanthranilate isomerase activity"/>
    <property type="evidence" value="ECO:0007669"/>
    <property type="project" value="UniProtKB-UniRule"/>
</dbReference>
<dbReference type="GO" id="GO:0000162">
    <property type="term" value="P:L-tryptophan biosynthetic process"/>
    <property type="evidence" value="ECO:0007669"/>
    <property type="project" value="UniProtKB-UniRule"/>
</dbReference>
<dbReference type="CDD" id="cd00405">
    <property type="entry name" value="PRAI"/>
    <property type="match status" value="1"/>
</dbReference>
<dbReference type="FunFam" id="3.20.20.70:FF:000075">
    <property type="entry name" value="Tryptophan biosynthesis protein TRP1"/>
    <property type="match status" value="1"/>
</dbReference>
<dbReference type="Gene3D" id="3.20.20.70">
    <property type="entry name" value="Aldolase class I"/>
    <property type="match status" value="1"/>
</dbReference>
<dbReference type="HAMAP" id="MF_00135">
    <property type="entry name" value="PRAI"/>
    <property type="match status" value="1"/>
</dbReference>
<dbReference type="InterPro" id="IPR013785">
    <property type="entry name" value="Aldolase_TIM"/>
</dbReference>
<dbReference type="InterPro" id="IPR001240">
    <property type="entry name" value="PRAI_dom"/>
</dbReference>
<dbReference type="InterPro" id="IPR011060">
    <property type="entry name" value="RibuloseP-bd_barrel"/>
</dbReference>
<dbReference type="InterPro" id="IPR044643">
    <property type="entry name" value="TrpF_fam"/>
</dbReference>
<dbReference type="NCBIfam" id="NF002298">
    <property type="entry name" value="PRK01222.1-4"/>
    <property type="match status" value="1"/>
</dbReference>
<dbReference type="PANTHER" id="PTHR42894">
    <property type="entry name" value="N-(5'-PHOSPHORIBOSYL)ANTHRANILATE ISOMERASE"/>
    <property type="match status" value="1"/>
</dbReference>
<dbReference type="PANTHER" id="PTHR42894:SF1">
    <property type="entry name" value="N-(5'-PHOSPHORIBOSYL)ANTHRANILATE ISOMERASE"/>
    <property type="match status" value="1"/>
</dbReference>
<dbReference type="Pfam" id="PF00697">
    <property type="entry name" value="PRAI"/>
    <property type="match status" value="1"/>
</dbReference>
<dbReference type="SUPFAM" id="SSF51366">
    <property type="entry name" value="Ribulose-phoshate binding barrel"/>
    <property type="match status" value="1"/>
</dbReference>
<gene>
    <name evidence="1" type="primary">trpF</name>
    <name type="ordered locus">Dred_0252</name>
</gene>
<name>TRPF_DESRM</name>
<sequence length="208" mass="22279">MVRVKICGVQDPKIGVAAALAGADAIGIVFASSSRRVTPEQAREICQALPPFTARVGIFVDTPQQEVQQIAHFCGLDVIQLHGGESADYCRDLGFRCIKAIPARNRQCLEEANAFPVSALLVDSYVNGKSGGNGCTFNWHLLEGLQLNKPLILAGGLNIENVGRAVAYVRPYGVDVSSGVEVKGQKDIPLIKAFIKRVREVSFNATGS</sequence>
<feature type="chain" id="PRO_1000071438" description="N-(5'-phosphoribosyl)anthranilate isomerase">
    <location>
        <begin position="1"/>
        <end position="208"/>
    </location>
</feature>
<keyword id="KW-0028">Amino-acid biosynthesis</keyword>
<keyword id="KW-0057">Aromatic amino acid biosynthesis</keyword>
<keyword id="KW-0413">Isomerase</keyword>
<keyword id="KW-1185">Reference proteome</keyword>
<keyword id="KW-0822">Tryptophan biosynthesis</keyword>
<proteinExistence type="inferred from homology"/>
<comment type="catalytic activity">
    <reaction evidence="1">
        <text>N-(5-phospho-beta-D-ribosyl)anthranilate = 1-(2-carboxyphenylamino)-1-deoxy-D-ribulose 5-phosphate</text>
        <dbReference type="Rhea" id="RHEA:21540"/>
        <dbReference type="ChEBI" id="CHEBI:18277"/>
        <dbReference type="ChEBI" id="CHEBI:58613"/>
        <dbReference type="EC" id="5.3.1.24"/>
    </reaction>
</comment>
<comment type="pathway">
    <text evidence="1">Amino-acid biosynthesis; L-tryptophan biosynthesis; L-tryptophan from chorismate: step 3/5.</text>
</comment>
<comment type="similarity">
    <text evidence="1">Belongs to the TrpF family.</text>
</comment>
<evidence type="ECO:0000255" key="1">
    <source>
        <dbReference type="HAMAP-Rule" id="MF_00135"/>
    </source>
</evidence>
<reference key="1">
    <citation type="submission" date="2007-03" db="EMBL/GenBank/DDBJ databases">
        <title>Complete sequence of Desulfotomaculum reducens MI-1.</title>
        <authorList>
            <consortium name="US DOE Joint Genome Institute"/>
            <person name="Copeland A."/>
            <person name="Lucas S."/>
            <person name="Lapidus A."/>
            <person name="Barry K."/>
            <person name="Detter J.C."/>
            <person name="Glavina del Rio T."/>
            <person name="Hammon N."/>
            <person name="Israni S."/>
            <person name="Dalin E."/>
            <person name="Tice H."/>
            <person name="Pitluck S."/>
            <person name="Sims D."/>
            <person name="Brettin T."/>
            <person name="Bruce D."/>
            <person name="Han C."/>
            <person name="Tapia R."/>
            <person name="Schmutz J."/>
            <person name="Larimer F."/>
            <person name="Land M."/>
            <person name="Hauser L."/>
            <person name="Kyrpides N."/>
            <person name="Kim E."/>
            <person name="Tebo B.M."/>
            <person name="Richardson P."/>
        </authorList>
    </citation>
    <scope>NUCLEOTIDE SEQUENCE [LARGE SCALE GENOMIC DNA]</scope>
    <source>
        <strain>ATCC BAA-1160 / DSM 100696 / MI-1</strain>
    </source>
</reference>
<protein>
    <recommendedName>
        <fullName evidence="1">N-(5'-phosphoribosyl)anthranilate isomerase</fullName>
        <shortName evidence="1">PRAI</shortName>
        <ecNumber evidence="1">5.3.1.24</ecNumber>
    </recommendedName>
</protein>
<accession>A4J148</accession>